<organism>
    <name type="scientific">Influenza A virus (strain A/Udorn/1972 H3N2)</name>
    <dbReference type="NCBI Taxonomy" id="385599"/>
    <lineage>
        <taxon>Viruses</taxon>
        <taxon>Riboviria</taxon>
        <taxon>Orthornavirae</taxon>
        <taxon>Negarnaviricota</taxon>
        <taxon>Polyploviricotina</taxon>
        <taxon>Insthoviricetes</taxon>
        <taxon>Articulavirales</taxon>
        <taxon>Orthomyxoviridae</taxon>
        <taxon>Alphainfluenzavirus</taxon>
        <taxon>Alphainfluenzavirus influenzae</taxon>
        <taxon>Influenza A virus</taxon>
    </lineage>
</organism>
<accession>P0DOF8</accession>
<accession>P03490</accession>
<accession>P63231</accession>
<accession>Q1K9D8</accession>
<feature type="chain" id="PRO_0000078892" description="Matrix protein 2">
    <location>
        <begin position="1"/>
        <end position="97"/>
    </location>
</feature>
<feature type="topological domain" description="Virion surface" evidence="2">
    <location>
        <begin position="1"/>
        <end position="22"/>
    </location>
</feature>
<feature type="transmembrane region" description="Helical; Signal-anchor for type III membrane protein" evidence="2">
    <location>
        <begin position="23"/>
        <end position="43"/>
    </location>
</feature>
<feature type="topological domain" description="Intravirion" evidence="2">
    <location>
        <begin position="44"/>
        <end position="97"/>
    </location>
</feature>
<feature type="region of interest" description="Disordered" evidence="3">
    <location>
        <begin position="60"/>
        <end position="88"/>
    </location>
</feature>
<feature type="compositionally biased region" description="Basic and acidic residues" evidence="3">
    <location>
        <begin position="71"/>
        <end position="80"/>
    </location>
</feature>
<feature type="site" description="Essential for channel activity, possibly by being protonated during channel activation, and by forming the channel gate and the selective filter" evidence="2">
    <location>
        <position position="37"/>
    </location>
</feature>
<feature type="site" description="Seems to be involved in pH gating" evidence="2">
    <location>
        <position position="41"/>
    </location>
</feature>
<feature type="site" description="Not phosphorylated">
    <location>
        <position position="71"/>
    </location>
</feature>
<feature type="modified residue" description="Phosphoserine; by host" evidence="2 7">
    <location>
        <position position="64"/>
    </location>
</feature>
<feature type="modified residue" description="Phosphoserine; by host" evidence="2 7">
    <location>
        <position position="82"/>
    </location>
</feature>
<feature type="modified residue" description="Phosphoserine; by host" evidence="7">
    <location>
        <position position="89"/>
    </location>
</feature>
<feature type="modified residue" description="Phosphoserine; by host" evidence="2 7">
    <location>
        <position position="93"/>
    </location>
</feature>
<feature type="lipid moiety-binding region" description="S-palmitoyl cysteine; by host" evidence="2">
    <location>
        <position position="50"/>
    </location>
</feature>
<feature type="glycosylation site" description="N-linked (GlcNAc...) asparagine; by host" evidence="2">
    <location>
        <position position="20"/>
    </location>
</feature>
<feature type="disulfide bond" description="Interchain (with C-17)" evidence="2 5">
    <location>
        <position position="17"/>
    </location>
</feature>
<feature type="disulfide bond" description="Interchain (with C-19)" evidence="2 5">
    <location>
        <position position="19"/>
    </location>
</feature>
<feature type="mutagenesis site" description="Increased channel activity. Resistant to amantatine." evidence="6">
    <original>V</original>
    <variation>A</variation>
    <location>
        <position position="27"/>
    </location>
</feature>
<feature type="mutagenesis site" description="Increased channel activity. Resistant to amantatine." evidence="6">
    <original>V</original>
    <variation>S</variation>
    <location>
        <position position="27"/>
    </location>
</feature>
<feature type="mutagenesis site" description="Increased channel activity." evidence="6">
    <original>V</original>
    <variation>T</variation>
    <location>
        <position position="27"/>
    </location>
</feature>
<feature type="mutagenesis site" description="Almost complete loss of channel activity. Resistant to amantatine." evidence="6">
    <original>A</original>
    <variation>P</variation>
    <location>
        <position position="30"/>
    </location>
</feature>
<feature type="mutagenesis site" description="Greatly reduced channel activity. Resistant to amantatine." evidence="6">
    <original>A</original>
    <variation>T</variation>
    <location>
        <position position="30"/>
    </location>
</feature>
<feature type="mutagenesis site" description="No effect on channel activity. Resistant to amantatine." evidence="6">
    <original>S</original>
    <variation>N</variation>
    <location>
        <position position="31"/>
    </location>
</feature>
<feature type="mutagenesis site" description="Increased channel activity. Resistant to amantatine." evidence="6">
    <original>G</original>
    <variation>E</variation>
    <location>
        <position position="34"/>
    </location>
</feature>
<feature type="mutagenesis site" description="Almost complete loss of channel activity." evidence="6">
    <original>W</original>
    <variation>A</variation>
    <location>
        <position position="41"/>
    </location>
</feature>
<feature type="mutagenesis site" description="85% reduction in phosphate labeling of M2 protein." evidence="7">
    <original>S</original>
    <variation>A</variation>
    <location>
        <position position="64"/>
    </location>
</feature>
<evidence type="ECO:0000250" key="1"/>
<evidence type="ECO:0000255" key="2">
    <source>
        <dbReference type="HAMAP-Rule" id="MF_04069"/>
    </source>
</evidence>
<evidence type="ECO:0000256" key="3">
    <source>
        <dbReference type="SAM" id="MobiDB-lite"/>
    </source>
</evidence>
<evidence type="ECO:0000269" key="4">
    <source>
    </source>
</evidence>
<evidence type="ECO:0000269" key="5">
    <source>
    </source>
</evidence>
<evidence type="ECO:0000269" key="6">
    <source>
    </source>
</evidence>
<evidence type="ECO:0000269" key="7">
    <source>
    </source>
</evidence>
<gene>
    <name evidence="2" type="primary">M</name>
</gene>
<name>M2_I72A8</name>
<comment type="function">
    <text evidence="1 6">Forms a proton-selective ion channel that is necessary for the efficient release of the viral genome during virus entry. After attaching to the cell surface, the virion enters the cell by endocytosis. Acidification of the endosome triggers M2 ion channel activity. The influx of protons into virion interior is believed to disrupt interactions between the viral ribonucleoprotein (RNP), matrix protein 1 (M1), and lipid bilayers, thereby freeing the viral genome from interaction with viral proteins and enabling RNA segments to migrate to the host cell nucleus, where influenza virus RNA transcription and replication occur. Also plays a role in viral proteins secretory pathway. Elevates the intravesicular pH of normally acidic compartments, such as trans-Golgi network, preventing newly formed hemagglutinin from premature switching to the fusion-active conformation (By similarity).</text>
</comment>
<comment type="function">
    <text evidence="2">Forms a proton-selective ion channel that is necessary for the efficient release of the viral genome during virus entry. After attaching to the cell surface, the virion enters the cell by endocytosis. Acidification of the endosome triggers M2 ion channel activity. The influx of protons into virion interior is believed to disrupt interactions between the viral ribonucleoprotein (RNP), matrix protein 1 (M1), and lipid bilayers, thereby freeing the viral genome from interaction with viral proteins and enabling RNA segments to migrate to the host cell nucleus, where influenza virus RNA transcription and replication occur. Also plays a role in viral proteins secretory pathway. Elevates the intravesicular pH of normally acidic compartments, such as trans-Golgi network, preventing newly formed hemagglutinin from premature switching to the fusion-active conformation.</text>
</comment>
<comment type="activity regulation">
    <text>The M2 protein from most influenza A strains is inhibited by amantadine and rimantadine, resulting in viral uncoating incapacity. Emergence of amantadine-resistant variants is usually rapid.</text>
</comment>
<comment type="subunit">
    <text evidence="2 4 5">Homotetramer; composed of two disulfide-linked dimers held together by non-covalent interactions (PubMed:2053285). May interact with matrix protein 1 (PubMed:16873274).</text>
</comment>
<comment type="subcellular location">
    <subcellularLocation>
        <location evidence="2">Virion membrane</location>
    </subcellularLocation>
    <subcellularLocation>
        <location evidence="2">Host apical cell membrane</location>
        <topology evidence="2">Single-pass type III membrane protein</topology>
    </subcellularLocation>
    <text evidence="2">Abundantly expressed at the apical plasma membrane in infected polarized epithelial cells, in close proximity to budding and assembled virions. Minor component of virions (only 16-20 molecules/virion).</text>
</comment>
<comment type="alternative products">
    <event type="alternative splicing"/>
    <isoform>
        <id>P0DOF8-1</id>
        <id>P03490-1</id>
        <id>P63231-1</id>
        <name>M2</name>
        <sequence type="displayed"/>
    </isoform>
    <isoform>
        <id>P0DOF7-1</id>
        <id>P03486-1</id>
        <id>P63233-1</id>
        <name>M1</name>
        <sequence type="external"/>
    </isoform>
    <text>Only the first 9 residues are shared by the 2 isoforms.</text>
</comment>
<comment type="domain">
    <text evidence="2">Cytoplasmic tail plays an important role in virion assembly and morphogenesis.</text>
</comment>
<comment type="miscellaneous">
    <text evidence="2">When the channel is activated, one or more imidazole moieties of His-37 probably become bi-protonated.</text>
</comment>
<comment type="similarity">
    <text evidence="2">Belongs to the influenza viruses matrix protein M2 family.</text>
</comment>
<dbReference type="EMBL" id="J02167">
    <property type="protein sequence ID" value="AAA43303.1"/>
    <property type="molecule type" value="Genomic_RNA"/>
</dbReference>
<dbReference type="SMR" id="P0DOF8"/>
<dbReference type="IntAct" id="P0DOF8">
    <property type="interactions" value="1"/>
</dbReference>
<dbReference type="BindingDB" id="P0DOF8"/>
<dbReference type="ChEMBL" id="CHEMBL2052"/>
<dbReference type="DrugCentral" id="P0DOF8"/>
<dbReference type="GlyCosmos" id="P0DOF8">
    <property type="glycosylation" value="1 site, No reported glycans"/>
</dbReference>
<dbReference type="iPTMnet" id="P0DOF8"/>
<dbReference type="Proteomes" id="UP000171580">
    <property type="component" value="Genome"/>
</dbReference>
<dbReference type="GO" id="GO:0020002">
    <property type="term" value="C:host cell plasma membrane"/>
    <property type="evidence" value="ECO:0007669"/>
    <property type="project" value="UniProtKB-SubCell"/>
</dbReference>
<dbReference type="GO" id="GO:0016020">
    <property type="term" value="C:membrane"/>
    <property type="evidence" value="ECO:0007669"/>
    <property type="project" value="UniProtKB-UniRule"/>
</dbReference>
<dbReference type="GO" id="GO:0055036">
    <property type="term" value="C:virion membrane"/>
    <property type="evidence" value="ECO:0007669"/>
    <property type="project" value="UniProtKB-SubCell"/>
</dbReference>
<dbReference type="GO" id="GO:0005216">
    <property type="term" value="F:monoatomic ion channel activity"/>
    <property type="evidence" value="ECO:0007669"/>
    <property type="project" value="UniProtKB-UniRule"/>
</dbReference>
<dbReference type="GO" id="GO:0015078">
    <property type="term" value="F:proton transmembrane transporter activity"/>
    <property type="evidence" value="ECO:0007669"/>
    <property type="project" value="UniProtKB-UniRule"/>
</dbReference>
<dbReference type="GO" id="GO:0051259">
    <property type="term" value="P:protein complex oligomerization"/>
    <property type="evidence" value="ECO:0007669"/>
    <property type="project" value="UniProtKB-UniRule"/>
</dbReference>
<dbReference type="GO" id="GO:0044694">
    <property type="term" value="P:symbiont genome entry into host cell via pore formation in plasma membrane"/>
    <property type="evidence" value="ECO:0007669"/>
    <property type="project" value="UniProtKB-UniRule"/>
</dbReference>
<dbReference type="GO" id="GO:0140321">
    <property type="term" value="P:symbiont-mediated suppression of host autophagy"/>
    <property type="evidence" value="ECO:0007669"/>
    <property type="project" value="UniProtKB-KW"/>
</dbReference>
<dbReference type="Gene3D" id="6.10.250.1640">
    <property type="match status" value="1"/>
</dbReference>
<dbReference type="HAMAP" id="MF_04069">
    <property type="entry name" value="INFV_M2"/>
    <property type="match status" value="1"/>
</dbReference>
<dbReference type="InterPro" id="IPR002089">
    <property type="entry name" value="Flu_M2"/>
</dbReference>
<dbReference type="Pfam" id="PF00599">
    <property type="entry name" value="Flu_M2"/>
    <property type="match status" value="1"/>
</dbReference>
<organismHost>
    <name type="scientific">Aves</name>
    <dbReference type="NCBI Taxonomy" id="8782"/>
</organismHost>
<organismHost>
    <name type="scientific">Cetacea</name>
    <name type="common">whales</name>
    <dbReference type="NCBI Taxonomy" id="9721"/>
</organismHost>
<organismHost>
    <name type="scientific">Homo sapiens</name>
    <name type="common">Human</name>
    <dbReference type="NCBI Taxonomy" id="9606"/>
</organismHost>
<organismHost>
    <name type="scientific">Phocidae</name>
    <name type="common">true seals</name>
    <dbReference type="NCBI Taxonomy" id="9709"/>
</organismHost>
<organismHost>
    <name type="scientific">Sus scrofa</name>
    <name type="common">Pig</name>
    <dbReference type="NCBI Taxonomy" id="9823"/>
</organismHost>
<reference key="1">
    <citation type="journal article" date="1981" name="Proc. Natl. Acad. Sci. U.S.A.">
        <title>Sequences of mRNAs derived from genome RNA segment 7 of influenza virus: colinear and interrupted mRNAs code for overlapping proteins.</title>
        <authorList>
            <person name="Lamb R.A."/>
            <person name="Lai C.-J."/>
            <person name="Choppin P.W."/>
        </authorList>
    </citation>
    <scope>NUCLEOTIDE SEQUENCE [GENOMIC RNA]</scope>
</reference>
<reference key="2">
    <citation type="journal article" date="1981" name="Virology">
        <title>Conservation of the influenza virus membrane protein (M1) amino acid sequence and an open reading frame of RNA segment 7 encoding a second protein (M2) in H1N1 and H3N2 strains.</title>
        <authorList>
            <person name="Lamb R.A."/>
            <person name="Lai C.-J."/>
        </authorList>
    </citation>
    <scope>NUCLEOTIDE SEQUENCE [GENOMIC RNA]</scope>
</reference>
<reference key="3">
    <citation type="journal article" date="1991" name="Virology">
        <title>Influenza virus M2 integral membrane protein is a homotetramer stabilized by formation of disulfide bonds.</title>
        <authorList>
            <person name="Holsinger L.J."/>
            <person name="Lamb R.A."/>
        </authorList>
    </citation>
    <scope>DISULFIDE BONDS</scope>
    <scope>SUBUNIT</scope>
</reference>
<reference key="4">
    <citation type="journal article" date="1994" name="J. Virol.">
        <title>Influenza A virus M2 ion channel protein: a structure-function analysis.</title>
        <authorList>
            <person name="Holsinger L.J."/>
            <person name="Nichani D."/>
            <person name="Pinto L.H."/>
            <person name="Lamb R.A."/>
        </authorList>
    </citation>
    <scope>FUNCTION</scope>
    <scope>MUTAGENESIS OF VAL-27; ALA-30; SER-31; GLY-34 AND TRP-41</scope>
</reference>
<reference key="5">
    <citation type="journal article" date="1995" name="J. Virol.">
        <title>Analysis of the posttranslational modifications of the influenza virus M2 protein.</title>
        <authorList>
            <person name="Holsinger L.J."/>
            <person name="Shaughnessy M.A."/>
            <person name="Micko A."/>
            <person name="Pinto L.H."/>
            <person name="Lamb R.A."/>
        </authorList>
    </citation>
    <scope>PHOSPHORYLATION AT SER-64; SER-82; SER-89 AND SER-93</scope>
    <scope>MUTAGENESIS OF SER-64</scope>
</reference>
<reference key="6">
    <citation type="journal article" date="2006" name="J. Virol.">
        <title>Distinct domains of the influenza a virus M2 protein cytoplasmic tail mediate binding to the M1 protein and facilitate infectious virus production.</title>
        <authorList>
            <person name="McCown M.F."/>
            <person name="Pekosz A."/>
        </authorList>
    </citation>
    <scope>INTERACTION WITH MATRIX PROTEIN 1</scope>
</reference>
<reference key="7">
    <citation type="journal article" date="2003" name="FEBS Lett.">
        <title>Proton conduction through the M2 protein of the influenza A virus; a quantitative, mechanistic analysis of experimental data.</title>
        <authorList>
            <person name="Lear J.D."/>
        </authorList>
    </citation>
    <scope>REVIEW</scope>
</reference>
<reference key="8">
    <citation type="journal article" date="2003" name="FEBS Lett.">
        <title>Computational studies of proton transport through the M2 channel.</title>
        <authorList>
            <person name="Wu Y."/>
            <person name="Voth G.A."/>
        </authorList>
    </citation>
    <scope>REVIEW</scope>
</reference>
<reference key="9">
    <citation type="journal article" date="2004" name="Virus Res.">
        <title>Assembly and budding of influenza virus.</title>
        <authorList>
            <person name="Nayak D.P."/>
            <person name="Hui E.K."/>
            <person name="Barman S."/>
        </authorList>
    </citation>
    <scope>REVIEW</scope>
</reference>
<keyword id="KW-0025">Alternative splicing</keyword>
<keyword id="KW-1015">Disulfide bond</keyword>
<keyword id="KW-0325">Glycoprotein</keyword>
<keyword id="KW-1032">Host cell membrane</keyword>
<keyword id="KW-1043">Host membrane</keyword>
<keyword id="KW-0945">Host-virus interaction</keyword>
<keyword id="KW-0375">Hydrogen ion transport</keyword>
<keyword id="KW-1083">Inhibition of host autophagy by virus</keyword>
<keyword id="KW-0407">Ion channel</keyword>
<keyword id="KW-0406">Ion transport</keyword>
<keyword id="KW-0449">Lipoprotein</keyword>
<keyword id="KW-0472">Membrane</keyword>
<keyword id="KW-0564">Palmitate</keyword>
<keyword id="KW-0597">Phosphoprotein</keyword>
<keyword id="KW-0735">Signal-anchor</keyword>
<keyword id="KW-0812">Transmembrane</keyword>
<keyword id="KW-1133">Transmembrane helix</keyword>
<keyword id="KW-0813">Transport</keyword>
<keyword id="KW-1182">Viral ion channel</keyword>
<keyword id="KW-0946">Virion</keyword>
<protein>
    <recommendedName>
        <fullName evidence="2">Matrix protein 2</fullName>
    </recommendedName>
    <alternativeName>
        <fullName evidence="2">Proton channel protein M2</fullName>
    </alternativeName>
</protein>
<proteinExistence type="evidence at protein level"/>
<sequence>MSLLTEVETPIRNEWGCRCNDSSDPLVVAASIIGILHLILWILDRLFFKCIYRFFEHGLKRGPSTEGVPESMREEYRKEQQSAVDADDSHFVSIELE</sequence>